<sequence>MKQNSAKFIVIEGLEGAGKSSAIALVRDFIEKHNGVPPVCTREPGGTPLAERIRDLVKIADPNDPLCDESECLLIYAARAQLVANVIKPALAQGNWVLGDRHNLSSLAYQGGGRQLMPLVEAVSQATLKDFKPDLTLYLDIDPQLGLQRARDRGALDRIEQQALSFFERARATYLQLAARDESIVVIDASQTMAQVHKEILAVLQRQDWS</sequence>
<organism>
    <name type="scientific">Shewanella loihica (strain ATCC BAA-1088 / PV-4)</name>
    <dbReference type="NCBI Taxonomy" id="323850"/>
    <lineage>
        <taxon>Bacteria</taxon>
        <taxon>Pseudomonadati</taxon>
        <taxon>Pseudomonadota</taxon>
        <taxon>Gammaproteobacteria</taxon>
        <taxon>Alteromonadales</taxon>
        <taxon>Shewanellaceae</taxon>
        <taxon>Shewanella</taxon>
    </lineage>
</organism>
<proteinExistence type="inferred from homology"/>
<accession>A3QD98</accession>
<gene>
    <name evidence="1" type="primary">tmk</name>
    <name type="ordered locus">Shew_1579</name>
</gene>
<name>KTHY_SHELP</name>
<comment type="function">
    <text evidence="1">Phosphorylation of dTMP to form dTDP in both de novo and salvage pathways of dTTP synthesis.</text>
</comment>
<comment type="catalytic activity">
    <reaction evidence="1">
        <text>dTMP + ATP = dTDP + ADP</text>
        <dbReference type="Rhea" id="RHEA:13517"/>
        <dbReference type="ChEBI" id="CHEBI:30616"/>
        <dbReference type="ChEBI" id="CHEBI:58369"/>
        <dbReference type="ChEBI" id="CHEBI:63528"/>
        <dbReference type="ChEBI" id="CHEBI:456216"/>
        <dbReference type="EC" id="2.7.4.9"/>
    </reaction>
</comment>
<comment type="similarity">
    <text evidence="1">Belongs to the thymidylate kinase family.</text>
</comment>
<evidence type="ECO:0000255" key="1">
    <source>
        <dbReference type="HAMAP-Rule" id="MF_00165"/>
    </source>
</evidence>
<reference key="1">
    <citation type="submission" date="2007-03" db="EMBL/GenBank/DDBJ databases">
        <title>Complete sequence of Shewanella loihica PV-4.</title>
        <authorList>
            <consortium name="US DOE Joint Genome Institute"/>
            <person name="Copeland A."/>
            <person name="Lucas S."/>
            <person name="Lapidus A."/>
            <person name="Barry K."/>
            <person name="Detter J.C."/>
            <person name="Glavina del Rio T."/>
            <person name="Hammon N."/>
            <person name="Israni S."/>
            <person name="Dalin E."/>
            <person name="Tice H."/>
            <person name="Pitluck S."/>
            <person name="Chain P."/>
            <person name="Malfatti S."/>
            <person name="Shin M."/>
            <person name="Vergez L."/>
            <person name="Schmutz J."/>
            <person name="Larimer F."/>
            <person name="Land M."/>
            <person name="Hauser L."/>
            <person name="Kyrpides N."/>
            <person name="Mikhailova N."/>
            <person name="Romine M.F."/>
            <person name="Serres G."/>
            <person name="Fredrickson J."/>
            <person name="Tiedje J."/>
            <person name="Richardson P."/>
        </authorList>
    </citation>
    <scope>NUCLEOTIDE SEQUENCE [LARGE SCALE GENOMIC DNA]</scope>
    <source>
        <strain>ATCC BAA-1088 / PV-4</strain>
    </source>
</reference>
<dbReference type="EC" id="2.7.4.9" evidence="1"/>
<dbReference type="EMBL" id="CP000606">
    <property type="protein sequence ID" value="ABO23446.1"/>
    <property type="molecule type" value="Genomic_DNA"/>
</dbReference>
<dbReference type="RefSeq" id="WP_011865378.1">
    <property type="nucleotide sequence ID" value="NC_009092.1"/>
</dbReference>
<dbReference type="SMR" id="A3QD98"/>
<dbReference type="STRING" id="323850.Shew_1579"/>
<dbReference type="KEGG" id="slo:Shew_1579"/>
<dbReference type="eggNOG" id="COG0125">
    <property type="taxonomic scope" value="Bacteria"/>
</dbReference>
<dbReference type="HOGENOM" id="CLU_049131_0_1_6"/>
<dbReference type="OrthoDB" id="9774907at2"/>
<dbReference type="Proteomes" id="UP000001558">
    <property type="component" value="Chromosome"/>
</dbReference>
<dbReference type="GO" id="GO:0005829">
    <property type="term" value="C:cytosol"/>
    <property type="evidence" value="ECO:0007669"/>
    <property type="project" value="TreeGrafter"/>
</dbReference>
<dbReference type="GO" id="GO:0005524">
    <property type="term" value="F:ATP binding"/>
    <property type="evidence" value="ECO:0007669"/>
    <property type="project" value="UniProtKB-UniRule"/>
</dbReference>
<dbReference type="GO" id="GO:0004798">
    <property type="term" value="F:dTMP kinase activity"/>
    <property type="evidence" value="ECO:0007669"/>
    <property type="project" value="UniProtKB-UniRule"/>
</dbReference>
<dbReference type="GO" id="GO:0006233">
    <property type="term" value="P:dTDP biosynthetic process"/>
    <property type="evidence" value="ECO:0007669"/>
    <property type="project" value="InterPro"/>
</dbReference>
<dbReference type="GO" id="GO:0006235">
    <property type="term" value="P:dTTP biosynthetic process"/>
    <property type="evidence" value="ECO:0007669"/>
    <property type="project" value="UniProtKB-UniRule"/>
</dbReference>
<dbReference type="GO" id="GO:0006227">
    <property type="term" value="P:dUDP biosynthetic process"/>
    <property type="evidence" value="ECO:0007669"/>
    <property type="project" value="TreeGrafter"/>
</dbReference>
<dbReference type="CDD" id="cd01672">
    <property type="entry name" value="TMPK"/>
    <property type="match status" value="1"/>
</dbReference>
<dbReference type="FunFam" id="3.40.50.300:FF:000321">
    <property type="entry name" value="Thymidylate kinase"/>
    <property type="match status" value="1"/>
</dbReference>
<dbReference type="Gene3D" id="3.40.50.300">
    <property type="entry name" value="P-loop containing nucleotide triphosphate hydrolases"/>
    <property type="match status" value="1"/>
</dbReference>
<dbReference type="HAMAP" id="MF_00165">
    <property type="entry name" value="Thymidylate_kinase"/>
    <property type="match status" value="1"/>
</dbReference>
<dbReference type="InterPro" id="IPR027417">
    <property type="entry name" value="P-loop_NTPase"/>
</dbReference>
<dbReference type="InterPro" id="IPR039430">
    <property type="entry name" value="Thymidylate_kin-like_dom"/>
</dbReference>
<dbReference type="InterPro" id="IPR018095">
    <property type="entry name" value="Thymidylate_kin_CS"/>
</dbReference>
<dbReference type="InterPro" id="IPR018094">
    <property type="entry name" value="Thymidylate_kinase"/>
</dbReference>
<dbReference type="NCBIfam" id="TIGR00041">
    <property type="entry name" value="DTMP_kinase"/>
    <property type="match status" value="1"/>
</dbReference>
<dbReference type="PANTHER" id="PTHR10344">
    <property type="entry name" value="THYMIDYLATE KINASE"/>
    <property type="match status" value="1"/>
</dbReference>
<dbReference type="PANTHER" id="PTHR10344:SF4">
    <property type="entry name" value="UMP-CMP KINASE 2, MITOCHONDRIAL"/>
    <property type="match status" value="1"/>
</dbReference>
<dbReference type="Pfam" id="PF02223">
    <property type="entry name" value="Thymidylate_kin"/>
    <property type="match status" value="1"/>
</dbReference>
<dbReference type="SUPFAM" id="SSF52540">
    <property type="entry name" value="P-loop containing nucleoside triphosphate hydrolases"/>
    <property type="match status" value="1"/>
</dbReference>
<dbReference type="PROSITE" id="PS01331">
    <property type="entry name" value="THYMIDYLATE_KINASE"/>
    <property type="match status" value="1"/>
</dbReference>
<keyword id="KW-0067">ATP-binding</keyword>
<keyword id="KW-0418">Kinase</keyword>
<keyword id="KW-0545">Nucleotide biosynthesis</keyword>
<keyword id="KW-0547">Nucleotide-binding</keyword>
<keyword id="KW-1185">Reference proteome</keyword>
<keyword id="KW-0808">Transferase</keyword>
<feature type="chain" id="PRO_1000023277" description="Thymidylate kinase">
    <location>
        <begin position="1"/>
        <end position="210"/>
    </location>
</feature>
<feature type="binding site" evidence="1">
    <location>
        <begin position="13"/>
        <end position="20"/>
    </location>
    <ligand>
        <name>ATP</name>
        <dbReference type="ChEBI" id="CHEBI:30616"/>
    </ligand>
</feature>
<protein>
    <recommendedName>
        <fullName evidence="1">Thymidylate kinase</fullName>
        <ecNumber evidence="1">2.7.4.9</ecNumber>
    </recommendedName>
    <alternativeName>
        <fullName evidence="1">dTMP kinase</fullName>
    </alternativeName>
</protein>